<keyword id="KW-0175">Coiled coil</keyword>
<keyword id="KW-1185">Reference proteome</keyword>
<dbReference type="EMBL" id="BC093429">
    <property type="protein sequence ID" value="AAH93429.1"/>
    <property type="molecule type" value="mRNA"/>
</dbReference>
<dbReference type="RefSeq" id="NP_001017876.1">
    <property type="nucleotide sequence ID" value="NM_001017876.1"/>
</dbReference>
<dbReference type="SMR" id="Q566N9"/>
<dbReference type="FunCoup" id="Q566N9">
    <property type="interactions" value="186"/>
</dbReference>
<dbReference type="PaxDb" id="7955-ENSDARP00000107763"/>
<dbReference type="GeneID" id="550574"/>
<dbReference type="KEGG" id="dre:550574"/>
<dbReference type="AGR" id="ZFIN:ZDB-GENE-050417-428"/>
<dbReference type="CTD" id="161835"/>
<dbReference type="ZFIN" id="ZDB-GENE-050417-428">
    <property type="gene designation" value="fsip1"/>
</dbReference>
<dbReference type="eggNOG" id="ENOG502RXFB">
    <property type="taxonomic scope" value="Eukaryota"/>
</dbReference>
<dbReference type="InParanoid" id="Q566N9"/>
<dbReference type="OrthoDB" id="9946895at2759"/>
<dbReference type="PRO" id="PR:Q566N9"/>
<dbReference type="Proteomes" id="UP000000437">
    <property type="component" value="Unplaced"/>
</dbReference>
<dbReference type="InterPro" id="IPR026246">
    <property type="entry name" value="Fsip1"/>
</dbReference>
<dbReference type="PANTHER" id="PTHR22012">
    <property type="entry name" value="FIBROUS SHEATH INTERACTING PROTEIN 1"/>
    <property type="match status" value="1"/>
</dbReference>
<dbReference type="PANTHER" id="PTHR22012:SF2">
    <property type="entry name" value="FIBROUS SHEATH-INTERACTING PROTEIN 1"/>
    <property type="match status" value="1"/>
</dbReference>
<dbReference type="Pfam" id="PF15554">
    <property type="entry name" value="FSIP1"/>
    <property type="match status" value="2"/>
</dbReference>
<dbReference type="PRINTS" id="PR02075">
    <property type="entry name" value="FIBSHEATHIP1"/>
</dbReference>
<comment type="similarity">
    <text evidence="3">Belongs to the FSIP1 family.</text>
</comment>
<protein>
    <recommendedName>
        <fullName>Fibrous sheath-interacting protein 1</fullName>
    </recommendedName>
</protein>
<accession>Q566N9</accession>
<feature type="chain" id="PRO_0000314922" description="Fibrous sheath-interacting protein 1">
    <location>
        <begin position="1"/>
        <end position="374"/>
    </location>
</feature>
<feature type="region of interest" description="Disordered" evidence="2">
    <location>
        <begin position="1"/>
        <end position="80"/>
    </location>
</feature>
<feature type="region of interest" description="Disordered" evidence="2">
    <location>
        <begin position="95"/>
        <end position="120"/>
    </location>
</feature>
<feature type="region of interest" description="Disordered" evidence="2">
    <location>
        <begin position="225"/>
        <end position="244"/>
    </location>
</feature>
<feature type="coiled-coil region" evidence="1">
    <location>
        <begin position="262"/>
        <end position="290"/>
    </location>
</feature>
<feature type="compositionally biased region" description="Basic and acidic residues" evidence="2">
    <location>
        <begin position="12"/>
        <end position="28"/>
    </location>
</feature>
<feature type="compositionally biased region" description="Basic and acidic residues" evidence="2">
    <location>
        <begin position="45"/>
        <end position="55"/>
    </location>
</feature>
<feature type="compositionally biased region" description="Basic and acidic residues" evidence="2">
    <location>
        <begin position="65"/>
        <end position="77"/>
    </location>
</feature>
<organism>
    <name type="scientific">Danio rerio</name>
    <name type="common">Zebrafish</name>
    <name type="synonym">Brachydanio rerio</name>
    <dbReference type="NCBI Taxonomy" id="7955"/>
    <lineage>
        <taxon>Eukaryota</taxon>
        <taxon>Metazoa</taxon>
        <taxon>Chordata</taxon>
        <taxon>Craniata</taxon>
        <taxon>Vertebrata</taxon>
        <taxon>Euteleostomi</taxon>
        <taxon>Actinopterygii</taxon>
        <taxon>Neopterygii</taxon>
        <taxon>Teleostei</taxon>
        <taxon>Ostariophysi</taxon>
        <taxon>Cypriniformes</taxon>
        <taxon>Danionidae</taxon>
        <taxon>Danioninae</taxon>
        <taxon>Danio</taxon>
    </lineage>
</organism>
<name>FSIP1_DANRE</name>
<evidence type="ECO:0000255" key="1"/>
<evidence type="ECO:0000256" key="2">
    <source>
        <dbReference type="SAM" id="MobiDB-lite"/>
    </source>
</evidence>
<evidence type="ECO:0000305" key="3"/>
<gene>
    <name type="primary">fsip1</name>
    <name type="ORF">zgc:113106</name>
</gene>
<sequence length="374" mass="42591">MEVYSGQMGENPHSRGLEMDAEGSRDKSISSPREIGDQVSVDCMDIIKGRLDEISRPASSSSLSENRRKSAEGHRSLEVLSPDLNHTLFQRSIHEMTDQTTETSSDHEDSEEENEDPEMRKAIRKMKKLDRILAHKVSAEREVKQKGRELHQRLWQELQAESLHISSTEAENTRRFLSLTPSDCLECDEEDVFVPVFETEVVDLKTEVNSRPEPEECVEAAGHAEVGQEVTEDRRHTGASHSKSRHDFVKKNIELAGASGSSVFLTQQEKERIEDLLKDLEEELLEEPQLVLSSLSAGQGFSPEPSERHTLFNIDSRLQLLLPMQDFLSVRSSSSQGSLEESTGDQGLWTMRQRRDEERRLREIQEQLQILEET</sequence>
<reference key="1">
    <citation type="submission" date="2005-04" db="EMBL/GenBank/DDBJ databases">
        <authorList>
            <consortium name="NIH - Zebrafish Gene Collection (ZGC) project"/>
        </authorList>
    </citation>
    <scope>NUCLEOTIDE SEQUENCE [LARGE SCALE MRNA]</scope>
    <source>
        <tissue>Embryo</tissue>
    </source>
</reference>
<proteinExistence type="evidence at transcript level"/>